<protein>
    <recommendedName>
        <fullName>NOP protein chaperone 1</fullName>
    </recommendedName>
</protein>
<reference key="1">
    <citation type="journal article" date="2005" name="Science">
        <title>The transcriptional landscape of the mammalian genome.</title>
        <authorList>
            <person name="Carninci P."/>
            <person name="Kasukawa T."/>
            <person name="Katayama S."/>
            <person name="Gough J."/>
            <person name="Frith M.C."/>
            <person name="Maeda N."/>
            <person name="Oyama R."/>
            <person name="Ravasi T."/>
            <person name="Lenhard B."/>
            <person name="Wells C."/>
            <person name="Kodzius R."/>
            <person name="Shimokawa K."/>
            <person name="Bajic V.B."/>
            <person name="Brenner S.E."/>
            <person name="Batalov S."/>
            <person name="Forrest A.R."/>
            <person name="Zavolan M."/>
            <person name="Davis M.J."/>
            <person name="Wilming L.G."/>
            <person name="Aidinis V."/>
            <person name="Allen J.E."/>
            <person name="Ambesi-Impiombato A."/>
            <person name="Apweiler R."/>
            <person name="Aturaliya R.N."/>
            <person name="Bailey T.L."/>
            <person name="Bansal M."/>
            <person name="Baxter L."/>
            <person name="Beisel K.W."/>
            <person name="Bersano T."/>
            <person name="Bono H."/>
            <person name="Chalk A.M."/>
            <person name="Chiu K.P."/>
            <person name="Choudhary V."/>
            <person name="Christoffels A."/>
            <person name="Clutterbuck D.R."/>
            <person name="Crowe M.L."/>
            <person name="Dalla E."/>
            <person name="Dalrymple B.P."/>
            <person name="de Bono B."/>
            <person name="Della Gatta G."/>
            <person name="di Bernardo D."/>
            <person name="Down T."/>
            <person name="Engstrom P."/>
            <person name="Fagiolini M."/>
            <person name="Faulkner G."/>
            <person name="Fletcher C.F."/>
            <person name="Fukushima T."/>
            <person name="Furuno M."/>
            <person name="Futaki S."/>
            <person name="Gariboldi M."/>
            <person name="Georgii-Hemming P."/>
            <person name="Gingeras T.R."/>
            <person name="Gojobori T."/>
            <person name="Green R.E."/>
            <person name="Gustincich S."/>
            <person name="Harbers M."/>
            <person name="Hayashi Y."/>
            <person name="Hensch T.K."/>
            <person name="Hirokawa N."/>
            <person name="Hill D."/>
            <person name="Huminiecki L."/>
            <person name="Iacono M."/>
            <person name="Ikeo K."/>
            <person name="Iwama A."/>
            <person name="Ishikawa T."/>
            <person name="Jakt M."/>
            <person name="Kanapin A."/>
            <person name="Katoh M."/>
            <person name="Kawasawa Y."/>
            <person name="Kelso J."/>
            <person name="Kitamura H."/>
            <person name="Kitano H."/>
            <person name="Kollias G."/>
            <person name="Krishnan S.P."/>
            <person name="Kruger A."/>
            <person name="Kummerfeld S.K."/>
            <person name="Kurochkin I.V."/>
            <person name="Lareau L.F."/>
            <person name="Lazarevic D."/>
            <person name="Lipovich L."/>
            <person name="Liu J."/>
            <person name="Liuni S."/>
            <person name="McWilliam S."/>
            <person name="Madan Babu M."/>
            <person name="Madera M."/>
            <person name="Marchionni L."/>
            <person name="Matsuda H."/>
            <person name="Matsuzawa S."/>
            <person name="Miki H."/>
            <person name="Mignone F."/>
            <person name="Miyake S."/>
            <person name="Morris K."/>
            <person name="Mottagui-Tabar S."/>
            <person name="Mulder N."/>
            <person name="Nakano N."/>
            <person name="Nakauchi H."/>
            <person name="Ng P."/>
            <person name="Nilsson R."/>
            <person name="Nishiguchi S."/>
            <person name="Nishikawa S."/>
            <person name="Nori F."/>
            <person name="Ohara O."/>
            <person name="Okazaki Y."/>
            <person name="Orlando V."/>
            <person name="Pang K.C."/>
            <person name="Pavan W.J."/>
            <person name="Pavesi G."/>
            <person name="Pesole G."/>
            <person name="Petrovsky N."/>
            <person name="Piazza S."/>
            <person name="Reed J."/>
            <person name="Reid J.F."/>
            <person name="Ring B.Z."/>
            <person name="Ringwald M."/>
            <person name="Rost B."/>
            <person name="Ruan Y."/>
            <person name="Salzberg S.L."/>
            <person name="Sandelin A."/>
            <person name="Schneider C."/>
            <person name="Schoenbach C."/>
            <person name="Sekiguchi K."/>
            <person name="Semple C.A."/>
            <person name="Seno S."/>
            <person name="Sessa L."/>
            <person name="Sheng Y."/>
            <person name="Shibata Y."/>
            <person name="Shimada H."/>
            <person name="Shimada K."/>
            <person name="Silva D."/>
            <person name="Sinclair B."/>
            <person name="Sperling S."/>
            <person name="Stupka E."/>
            <person name="Sugiura K."/>
            <person name="Sultana R."/>
            <person name="Takenaka Y."/>
            <person name="Taki K."/>
            <person name="Tammoja K."/>
            <person name="Tan S.L."/>
            <person name="Tang S."/>
            <person name="Taylor M.S."/>
            <person name="Tegner J."/>
            <person name="Teichmann S.A."/>
            <person name="Ueda H.R."/>
            <person name="van Nimwegen E."/>
            <person name="Verardo R."/>
            <person name="Wei C.L."/>
            <person name="Yagi K."/>
            <person name="Yamanishi H."/>
            <person name="Zabarovsky E."/>
            <person name="Zhu S."/>
            <person name="Zimmer A."/>
            <person name="Hide W."/>
            <person name="Bult C."/>
            <person name="Grimmond S.M."/>
            <person name="Teasdale R.D."/>
            <person name="Liu E.T."/>
            <person name="Brusic V."/>
            <person name="Quackenbush J."/>
            <person name="Wahlestedt C."/>
            <person name="Mattick J.S."/>
            <person name="Hume D.A."/>
            <person name="Kai C."/>
            <person name="Sasaki D."/>
            <person name="Tomaru Y."/>
            <person name="Fukuda S."/>
            <person name="Kanamori-Katayama M."/>
            <person name="Suzuki M."/>
            <person name="Aoki J."/>
            <person name="Arakawa T."/>
            <person name="Iida J."/>
            <person name="Imamura K."/>
            <person name="Itoh M."/>
            <person name="Kato T."/>
            <person name="Kawaji H."/>
            <person name="Kawagashira N."/>
            <person name="Kawashima T."/>
            <person name="Kojima M."/>
            <person name="Kondo S."/>
            <person name="Konno H."/>
            <person name="Nakano K."/>
            <person name="Ninomiya N."/>
            <person name="Nishio T."/>
            <person name="Okada M."/>
            <person name="Plessy C."/>
            <person name="Shibata K."/>
            <person name="Shiraki T."/>
            <person name="Suzuki S."/>
            <person name="Tagami M."/>
            <person name="Waki K."/>
            <person name="Watahiki A."/>
            <person name="Okamura-Oho Y."/>
            <person name="Suzuki H."/>
            <person name="Kawai J."/>
            <person name="Hayashizaki Y."/>
        </authorList>
    </citation>
    <scope>NUCLEOTIDE SEQUENCE [LARGE SCALE MRNA]</scope>
    <source>
        <strain>C57BL/6J</strain>
        <tissue>Egg</tissue>
        <tissue>Embryo</tissue>
        <tissue>Kidney</tissue>
        <tissue>Testis</tissue>
    </source>
</reference>
<reference key="2">
    <citation type="journal article" date="2004" name="Genome Res.">
        <title>The status, quality, and expansion of the NIH full-length cDNA project: the Mammalian Gene Collection (MGC).</title>
        <authorList>
            <consortium name="The MGC Project Team"/>
        </authorList>
    </citation>
    <scope>NUCLEOTIDE SEQUENCE [LARGE SCALE MRNA]</scope>
    <source>
        <strain>C57BL/6J</strain>
        <tissue>Embryo</tissue>
        <tissue>Eye</tissue>
    </source>
</reference>
<reference key="3">
    <citation type="journal article" date="2010" name="Cell">
        <title>A tissue-specific atlas of mouse protein phosphorylation and expression.</title>
        <authorList>
            <person name="Huttlin E.L."/>
            <person name="Jedrychowski M.P."/>
            <person name="Elias J.E."/>
            <person name="Goswami T."/>
            <person name="Rad R."/>
            <person name="Beausoleil S.A."/>
            <person name="Villen J."/>
            <person name="Haas W."/>
            <person name="Sowa M.E."/>
            <person name="Gygi S.P."/>
        </authorList>
    </citation>
    <scope>PHOSPHORYLATION [LARGE SCALE ANALYSIS] AT SER-177</scope>
    <scope>IDENTIFICATION BY MASS SPECTROMETRY [LARGE SCALE ANALYSIS]</scope>
    <source>
        <tissue>Kidney</tissue>
        <tissue>Lung</tissue>
        <tissue>Pancreas</tissue>
        <tissue>Testis</tissue>
    </source>
</reference>
<dbReference type="EMBL" id="AK020067">
    <property type="protein sequence ID" value="BAB31981.1"/>
    <property type="molecule type" value="mRNA"/>
</dbReference>
<dbReference type="EMBL" id="AK049544">
    <property type="protein sequence ID" value="BAC33802.1"/>
    <property type="molecule type" value="mRNA"/>
</dbReference>
<dbReference type="EMBL" id="AK147063">
    <property type="protein sequence ID" value="BAE27647.1"/>
    <property type="molecule type" value="mRNA"/>
</dbReference>
<dbReference type="EMBL" id="AK160350">
    <property type="protein sequence ID" value="BAE35752.1"/>
    <property type="molecule type" value="mRNA"/>
</dbReference>
<dbReference type="EMBL" id="AK162255">
    <property type="protein sequence ID" value="BAE36817.1"/>
    <property type="molecule type" value="mRNA"/>
</dbReference>
<dbReference type="EMBL" id="BC050904">
    <property type="protein sequence ID" value="AAH50904.1"/>
    <property type="molecule type" value="mRNA"/>
</dbReference>
<dbReference type="EMBL" id="BC094241">
    <property type="protein sequence ID" value="AAH94241.1"/>
    <property type="molecule type" value="mRNA"/>
</dbReference>
<dbReference type="CCDS" id="CCDS24076.1"/>
<dbReference type="RefSeq" id="NP_080855.1">
    <property type="nucleotide sequence ID" value="NM_026579.3"/>
</dbReference>
<dbReference type="SMR" id="Q9CX66"/>
<dbReference type="BioGRID" id="205768">
    <property type="interactions" value="2"/>
</dbReference>
<dbReference type="FunCoup" id="Q9CX66">
    <property type="interactions" value="253"/>
</dbReference>
<dbReference type="IntAct" id="Q9CX66">
    <property type="interactions" value="1"/>
</dbReference>
<dbReference type="MINT" id="Q9CX66"/>
<dbReference type="STRING" id="10090.ENSMUSP00000020488"/>
<dbReference type="iPTMnet" id="Q9CX66"/>
<dbReference type="PhosphoSitePlus" id="Q9CX66"/>
<dbReference type="jPOST" id="Q9CX66"/>
<dbReference type="PaxDb" id="10090-ENSMUSP00000020488"/>
<dbReference type="PeptideAtlas" id="Q9CX66"/>
<dbReference type="ProteomicsDB" id="285454"/>
<dbReference type="Pumba" id="Q9CX66"/>
<dbReference type="Antibodypedia" id="48157">
    <property type="antibodies" value="18 antibodies from 9 providers"/>
</dbReference>
<dbReference type="DNASU" id="28109"/>
<dbReference type="Ensembl" id="ENSMUST00000020488.9">
    <property type="protein sequence ID" value="ENSMUSP00000020488.8"/>
    <property type="gene ID" value="ENSMUSG00000020255.9"/>
</dbReference>
<dbReference type="GeneID" id="28109"/>
<dbReference type="KEGG" id="mmu:28109"/>
<dbReference type="UCSC" id="uc007gkg.2">
    <property type="organism name" value="mouse"/>
</dbReference>
<dbReference type="AGR" id="MGI:106381"/>
<dbReference type="CTD" id="121053"/>
<dbReference type="MGI" id="MGI:106381">
    <property type="gene designation" value="Nopchap1"/>
</dbReference>
<dbReference type="VEuPathDB" id="HostDB:ENSMUSG00000020255"/>
<dbReference type="eggNOG" id="ENOG502S6C1">
    <property type="taxonomic scope" value="Eukaryota"/>
</dbReference>
<dbReference type="GeneTree" id="ENSGT00390000000376"/>
<dbReference type="HOGENOM" id="CLU_105671_0_0_1"/>
<dbReference type="InParanoid" id="Q9CX66"/>
<dbReference type="OMA" id="HEFDIEH"/>
<dbReference type="OrthoDB" id="1112980at2759"/>
<dbReference type="PhylomeDB" id="Q9CX66"/>
<dbReference type="TreeFam" id="TF333191"/>
<dbReference type="BioGRID-ORCS" id="28109">
    <property type="hits" value="9 hits in 80 CRISPR screens"/>
</dbReference>
<dbReference type="ChiTaRS" id="D10Wsu102e">
    <property type="organism name" value="mouse"/>
</dbReference>
<dbReference type="PRO" id="PR:Q9CX66"/>
<dbReference type="Proteomes" id="UP000000589">
    <property type="component" value="Chromosome 10"/>
</dbReference>
<dbReference type="RNAct" id="Q9CX66">
    <property type="molecule type" value="protein"/>
</dbReference>
<dbReference type="Bgee" id="ENSMUSG00000020255">
    <property type="expression patterns" value="Expressed in primary oocyte and 263 other cell types or tissues"/>
</dbReference>
<dbReference type="GO" id="GO:0005634">
    <property type="term" value="C:nucleus"/>
    <property type="evidence" value="ECO:0007669"/>
    <property type="project" value="UniProtKB-SubCell"/>
</dbReference>
<dbReference type="GO" id="GO:0062064">
    <property type="term" value="F:box C/D methylation guide snoRNP complex binding"/>
    <property type="evidence" value="ECO:0000250"/>
    <property type="project" value="UniProtKB"/>
</dbReference>
<dbReference type="GO" id="GO:0000492">
    <property type="term" value="P:box C/D snoRNP assembly"/>
    <property type="evidence" value="ECO:0000250"/>
    <property type="project" value="UniProtKB"/>
</dbReference>
<dbReference type="InterPro" id="IPR027921">
    <property type="entry name" value="NOPCHAP1"/>
</dbReference>
<dbReference type="PANTHER" id="PTHR28674:SF1">
    <property type="entry name" value="NOP PROTEIN CHAPERONE 1"/>
    <property type="match status" value="1"/>
</dbReference>
<dbReference type="PANTHER" id="PTHR28674">
    <property type="entry name" value="SIMILAR TO DNA SEGMENT, CHR 10, WAYNE STATE UNIVERSITY 102,-EXPRESSED"/>
    <property type="match status" value="1"/>
</dbReference>
<dbReference type="Pfam" id="PF15370">
    <property type="entry name" value="NOPCHAP1"/>
    <property type="match status" value="1"/>
</dbReference>
<name>NOPC1_MOUSE</name>
<sequence length="185" mass="19967">MEFQGERGTGPGVSSSSVACSQVTVSRELLTAGSEGSGGIWDQLLISSKPHPRKTSTLQTVRMQRSPLLDQVQAFLPQMAQANEKLRREMAAAPAGHFNIENIDETSGNIIQMDVALFEMSRSDSKEEDSPEESSRDSSGDSSESEEDVCVPSEVTIENIKLPNAEGGKGKIEILDSPASKKKKQ</sequence>
<evidence type="ECO:0000250" key="1">
    <source>
        <dbReference type="UniProtKB" id="Q8N5I9"/>
    </source>
</evidence>
<evidence type="ECO:0000256" key="2">
    <source>
        <dbReference type="SAM" id="MobiDB-lite"/>
    </source>
</evidence>
<evidence type="ECO:0000305" key="3"/>
<evidence type="ECO:0000312" key="4">
    <source>
        <dbReference type="MGI" id="MGI:106381"/>
    </source>
</evidence>
<evidence type="ECO:0007744" key="5">
    <source>
    </source>
</evidence>
<feature type="chain" id="PRO_0000263624" description="NOP protein chaperone 1">
    <location>
        <begin position="1"/>
        <end position="185"/>
    </location>
</feature>
<feature type="region of interest" description="Disordered" evidence="2">
    <location>
        <begin position="121"/>
        <end position="185"/>
    </location>
</feature>
<feature type="modified residue" description="Phosphoserine" evidence="1">
    <location>
        <position position="34"/>
    </location>
</feature>
<feature type="modified residue" description="Phosphoserine" evidence="1">
    <location>
        <position position="66"/>
    </location>
</feature>
<feature type="modified residue" description="Phosphoserine" evidence="5">
    <location>
        <position position="177"/>
    </location>
</feature>
<feature type="sequence conflict" description="In Ref. 1; BAE35752." evidence="3" ref="1">
    <original>F</original>
    <variation>Y</variation>
    <location>
        <position position="3"/>
    </location>
</feature>
<organism>
    <name type="scientific">Mus musculus</name>
    <name type="common">Mouse</name>
    <dbReference type="NCBI Taxonomy" id="10090"/>
    <lineage>
        <taxon>Eukaryota</taxon>
        <taxon>Metazoa</taxon>
        <taxon>Chordata</taxon>
        <taxon>Craniata</taxon>
        <taxon>Vertebrata</taxon>
        <taxon>Euteleostomi</taxon>
        <taxon>Mammalia</taxon>
        <taxon>Eutheria</taxon>
        <taxon>Euarchontoglires</taxon>
        <taxon>Glires</taxon>
        <taxon>Rodentia</taxon>
        <taxon>Myomorpha</taxon>
        <taxon>Muroidea</taxon>
        <taxon>Muridae</taxon>
        <taxon>Murinae</taxon>
        <taxon>Mus</taxon>
        <taxon>Mus</taxon>
    </lineage>
</organism>
<keyword id="KW-0143">Chaperone</keyword>
<keyword id="KW-0539">Nucleus</keyword>
<keyword id="KW-0597">Phosphoprotein</keyword>
<keyword id="KW-1185">Reference proteome</keyword>
<proteinExistence type="evidence at protein level"/>
<accession>Q9CX66</accession>
<accession>Q3TS58</accession>
<accession>Q3TV68</accession>
<comment type="function">
    <text evidence="1">Client-loading PAQosome/R2TP complex cofactor that selects NOP58 to promote box C/D small nucleolar ribonucleoprotein (snoRNP) assembly. Acts as a bridge between NOP58 and the R2TP complex via RUVBL1:RUVBL2.</text>
</comment>
<comment type="subunit">
    <text evidence="1">Interacts with NOP58, RUVBL1 and RUVBL2; the interactions are direct and NOPCHAP1 bridges the association of NOP58 with RUVBL1:RUVBL2 even in absence of snoRNAs. The interactions with RUVBL1 and RUVBL2 are disrupted upon ATP binding.</text>
</comment>
<comment type="subcellular location">
    <subcellularLocation>
        <location evidence="1">Nucleus</location>
    </subcellularLocation>
</comment>
<gene>
    <name evidence="4" type="primary">Nopchap1</name>
    <name evidence="4" type="synonym">D10Wsu102e</name>
</gene>